<accession>B6IZ97</accession>
<gene>
    <name evidence="1" type="primary">sucC</name>
    <name type="ordered locus">CbuG_0616</name>
</gene>
<keyword id="KW-0067">ATP-binding</keyword>
<keyword id="KW-0436">Ligase</keyword>
<keyword id="KW-0460">Magnesium</keyword>
<keyword id="KW-0479">Metal-binding</keyword>
<keyword id="KW-0547">Nucleotide-binding</keyword>
<keyword id="KW-0816">Tricarboxylic acid cycle</keyword>
<evidence type="ECO:0000255" key="1">
    <source>
        <dbReference type="HAMAP-Rule" id="MF_00558"/>
    </source>
</evidence>
<proteinExistence type="inferred from homology"/>
<sequence length="390" mass="42349">MNLHEYQSKHLLKKYNIPVPASEVVFNPDAAVDAAAKIGGDRWVVKAQVHAGGRGKAGGVRLVKNKEELKSAVKALLGMRLVTYQTDERGQPVNQILVEQTSDIARELYLGAVIDRASQRIVFMASTEGGVEIEKVAEKSPEKILKVTVDPAIGLQPFQCRQLFFGLGLQDLKQMRSFTDIVMGLYRLFTERDLSLLEINPLVITGSGELICLDAKINIDDSALYRQSELREMRDTTQEDEHETMAQQWELNYIKLDGNIGCMVNGAGLAMATMDLIKLSGGDPANFLDVGGSATKERVTEAFKIIVSDKNVKGILVNIFGGIVRCDLIADGIISAVKEVGIDVPVVVRLEGNNAQLGAKKLADSGMNIIAAKGFADAAEQIVKQVGVIA</sequence>
<name>SUCC_COXB2</name>
<comment type="function">
    <text evidence="1">Succinyl-CoA synthetase functions in the citric acid cycle (TCA), coupling the hydrolysis of succinyl-CoA to the synthesis of either ATP or GTP and thus represents the only step of substrate-level phosphorylation in the TCA. The beta subunit provides nucleotide specificity of the enzyme and binds the substrate succinate, while the binding sites for coenzyme A and phosphate are found in the alpha subunit.</text>
</comment>
<comment type="catalytic activity">
    <reaction evidence="1">
        <text>succinate + ATP + CoA = succinyl-CoA + ADP + phosphate</text>
        <dbReference type="Rhea" id="RHEA:17661"/>
        <dbReference type="ChEBI" id="CHEBI:30031"/>
        <dbReference type="ChEBI" id="CHEBI:30616"/>
        <dbReference type="ChEBI" id="CHEBI:43474"/>
        <dbReference type="ChEBI" id="CHEBI:57287"/>
        <dbReference type="ChEBI" id="CHEBI:57292"/>
        <dbReference type="ChEBI" id="CHEBI:456216"/>
        <dbReference type="EC" id="6.2.1.5"/>
    </reaction>
    <physiologicalReaction direction="right-to-left" evidence="1">
        <dbReference type="Rhea" id="RHEA:17663"/>
    </physiologicalReaction>
</comment>
<comment type="catalytic activity">
    <reaction evidence="1">
        <text>GTP + succinate + CoA = succinyl-CoA + GDP + phosphate</text>
        <dbReference type="Rhea" id="RHEA:22120"/>
        <dbReference type="ChEBI" id="CHEBI:30031"/>
        <dbReference type="ChEBI" id="CHEBI:37565"/>
        <dbReference type="ChEBI" id="CHEBI:43474"/>
        <dbReference type="ChEBI" id="CHEBI:57287"/>
        <dbReference type="ChEBI" id="CHEBI:57292"/>
        <dbReference type="ChEBI" id="CHEBI:58189"/>
    </reaction>
    <physiologicalReaction direction="right-to-left" evidence="1">
        <dbReference type="Rhea" id="RHEA:22122"/>
    </physiologicalReaction>
</comment>
<comment type="cofactor">
    <cofactor evidence="1">
        <name>Mg(2+)</name>
        <dbReference type="ChEBI" id="CHEBI:18420"/>
    </cofactor>
    <text evidence="1">Binds 1 Mg(2+) ion per subunit.</text>
</comment>
<comment type="pathway">
    <text evidence="1">Carbohydrate metabolism; tricarboxylic acid cycle; succinate from succinyl-CoA (ligase route): step 1/1.</text>
</comment>
<comment type="subunit">
    <text evidence="1">Heterotetramer of two alpha and two beta subunits.</text>
</comment>
<comment type="similarity">
    <text evidence="1">Belongs to the succinate/malate CoA ligase beta subunit family.</text>
</comment>
<dbReference type="EC" id="6.2.1.5" evidence="1"/>
<dbReference type="EMBL" id="CP001019">
    <property type="protein sequence ID" value="ACJ18025.1"/>
    <property type="molecule type" value="Genomic_DNA"/>
</dbReference>
<dbReference type="RefSeq" id="WP_012569848.1">
    <property type="nucleotide sequence ID" value="NC_011527.1"/>
</dbReference>
<dbReference type="SMR" id="B6IZ97"/>
<dbReference type="KEGG" id="cbg:CbuG_0616"/>
<dbReference type="HOGENOM" id="CLU_037430_0_2_6"/>
<dbReference type="UniPathway" id="UPA00223">
    <property type="reaction ID" value="UER00999"/>
</dbReference>
<dbReference type="GO" id="GO:0005829">
    <property type="term" value="C:cytosol"/>
    <property type="evidence" value="ECO:0007669"/>
    <property type="project" value="TreeGrafter"/>
</dbReference>
<dbReference type="GO" id="GO:0042709">
    <property type="term" value="C:succinate-CoA ligase complex"/>
    <property type="evidence" value="ECO:0007669"/>
    <property type="project" value="TreeGrafter"/>
</dbReference>
<dbReference type="GO" id="GO:0005524">
    <property type="term" value="F:ATP binding"/>
    <property type="evidence" value="ECO:0007669"/>
    <property type="project" value="UniProtKB-UniRule"/>
</dbReference>
<dbReference type="GO" id="GO:0000287">
    <property type="term" value="F:magnesium ion binding"/>
    <property type="evidence" value="ECO:0007669"/>
    <property type="project" value="UniProtKB-UniRule"/>
</dbReference>
<dbReference type="GO" id="GO:0004775">
    <property type="term" value="F:succinate-CoA ligase (ADP-forming) activity"/>
    <property type="evidence" value="ECO:0007669"/>
    <property type="project" value="UniProtKB-UniRule"/>
</dbReference>
<dbReference type="GO" id="GO:0004776">
    <property type="term" value="F:succinate-CoA ligase (GDP-forming) activity"/>
    <property type="evidence" value="ECO:0007669"/>
    <property type="project" value="RHEA"/>
</dbReference>
<dbReference type="GO" id="GO:0006104">
    <property type="term" value="P:succinyl-CoA metabolic process"/>
    <property type="evidence" value="ECO:0007669"/>
    <property type="project" value="TreeGrafter"/>
</dbReference>
<dbReference type="GO" id="GO:0006099">
    <property type="term" value="P:tricarboxylic acid cycle"/>
    <property type="evidence" value="ECO:0007669"/>
    <property type="project" value="UniProtKB-UniRule"/>
</dbReference>
<dbReference type="FunFam" id="3.30.1490.20:FF:000002">
    <property type="entry name" value="Succinate--CoA ligase [ADP-forming] subunit beta"/>
    <property type="match status" value="1"/>
</dbReference>
<dbReference type="FunFam" id="3.30.470.20:FF:000002">
    <property type="entry name" value="Succinate--CoA ligase [ADP-forming] subunit beta"/>
    <property type="match status" value="1"/>
</dbReference>
<dbReference type="FunFam" id="3.40.50.261:FF:000001">
    <property type="entry name" value="Succinate--CoA ligase [ADP-forming] subunit beta"/>
    <property type="match status" value="1"/>
</dbReference>
<dbReference type="Gene3D" id="3.30.1490.20">
    <property type="entry name" value="ATP-grasp fold, A domain"/>
    <property type="match status" value="1"/>
</dbReference>
<dbReference type="Gene3D" id="3.30.470.20">
    <property type="entry name" value="ATP-grasp fold, B domain"/>
    <property type="match status" value="1"/>
</dbReference>
<dbReference type="Gene3D" id="3.40.50.261">
    <property type="entry name" value="Succinyl-CoA synthetase domains"/>
    <property type="match status" value="1"/>
</dbReference>
<dbReference type="HAMAP" id="MF_00558">
    <property type="entry name" value="Succ_CoA_beta"/>
    <property type="match status" value="1"/>
</dbReference>
<dbReference type="InterPro" id="IPR011761">
    <property type="entry name" value="ATP-grasp"/>
</dbReference>
<dbReference type="InterPro" id="IPR013650">
    <property type="entry name" value="ATP-grasp_succ-CoA_synth-type"/>
</dbReference>
<dbReference type="InterPro" id="IPR013815">
    <property type="entry name" value="ATP_grasp_subdomain_1"/>
</dbReference>
<dbReference type="InterPro" id="IPR017866">
    <property type="entry name" value="Succ-CoA_synthase_bsu_CS"/>
</dbReference>
<dbReference type="InterPro" id="IPR005811">
    <property type="entry name" value="SUCC_ACL_C"/>
</dbReference>
<dbReference type="InterPro" id="IPR005809">
    <property type="entry name" value="Succ_CoA_ligase-like_bsu"/>
</dbReference>
<dbReference type="InterPro" id="IPR016102">
    <property type="entry name" value="Succinyl-CoA_synth-like"/>
</dbReference>
<dbReference type="NCBIfam" id="NF001913">
    <property type="entry name" value="PRK00696.1"/>
    <property type="match status" value="1"/>
</dbReference>
<dbReference type="NCBIfam" id="TIGR01016">
    <property type="entry name" value="sucCoAbeta"/>
    <property type="match status" value="1"/>
</dbReference>
<dbReference type="PANTHER" id="PTHR11815:SF10">
    <property type="entry name" value="SUCCINATE--COA LIGASE [GDP-FORMING] SUBUNIT BETA, MITOCHONDRIAL"/>
    <property type="match status" value="1"/>
</dbReference>
<dbReference type="PANTHER" id="PTHR11815">
    <property type="entry name" value="SUCCINYL-COA SYNTHETASE BETA CHAIN"/>
    <property type="match status" value="1"/>
</dbReference>
<dbReference type="Pfam" id="PF08442">
    <property type="entry name" value="ATP-grasp_2"/>
    <property type="match status" value="1"/>
</dbReference>
<dbReference type="Pfam" id="PF00549">
    <property type="entry name" value="Ligase_CoA"/>
    <property type="match status" value="1"/>
</dbReference>
<dbReference type="PIRSF" id="PIRSF001554">
    <property type="entry name" value="SucCS_beta"/>
    <property type="match status" value="1"/>
</dbReference>
<dbReference type="SUPFAM" id="SSF56059">
    <property type="entry name" value="Glutathione synthetase ATP-binding domain-like"/>
    <property type="match status" value="1"/>
</dbReference>
<dbReference type="SUPFAM" id="SSF52210">
    <property type="entry name" value="Succinyl-CoA synthetase domains"/>
    <property type="match status" value="1"/>
</dbReference>
<dbReference type="PROSITE" id="PS50975">
    <property type="entry name" value="ATP_GRASP"/>
    <property type="match status" value="1"/>
</dbReference>
<dbReference type="PROSITE" id="PS01217">
    <property type="entry name" value="SUCCINYL_COA_LIG_3"/>
    <property type="match status" value="1"/>
</dbReference>
<reference key="1">
    <citation type="journal article" date="2009" name="Infect. Immun.">
        <title>Comparative genomics reveal extensive transposon-mediated genomic plasticity and diversity among potential effector proteins within the genus Coxiella.</title>
        <authorList>
            <person name="Beare P.A."/>
            <person name="Unsworth N."/>
            <person name="Andoh M."/>
            <person name="Voth D.E."/>
            <person name="Omsland A."/>
            <person name="Gilk S.D."/>
            <person name="Williams K.P."/>
            <person name="Sobral B.W."/>
            <person name="Kupko J.J. III"/>
            <person name="Porcella S.F."/>
            <person name="Samuel J.E."/>
            <person name="Heinzen R.A."/>
        </authorList>
    </citation>
    <scope>NUCLEOTIDE SEQUENCE [LARGE SCALE GENOMIC DNA]</scope>
    <source>
        <strain>CbuG_Q212</strain>
    </source>
</reference>
<protein>
    <recommendedName>
        <fullName evidence="1">Succinate--CoA ligase [ADP-forming] subunit beta</fullName>
        <ecNumber evidence="1">6.2.1.5</ecNumber>
    </recommendedName>
    <alternativeName>
        <fullName evidence="1">Succinyl-CoA synthetase subunit beta</fullName>
        <shortName evidence="1">SCS-beta</shortName>
    </alternativeName>
</protein>
<organism>
    <name type="scientific">Coxiella burnetii (strain CbuG_Q212)</name>
    <name type="common">Coxiella burnetii (strain Q212)</name>
    <dbReference type="NCBI Taxonomy" id="434923"/>
    <lineage>
        <taxon>Bacteria</taxon>
        <taxon>Pseudomonadati</taxon>
        <taxon>Pseudomonadota</taxon>
        <taxon>Gammaproteobacteria</taxon>
        <taxon>Legionellales</taxon>
        <taxon>Coxiellaceae</taxon>
        <taxon>Coxiella</taxon>
    </lineage>
</organism>
<feature type="chain" id="PRO_1000129177" description="Succinate--CoA ligase [ADP-forming] subunit beta">
    <location>
        <begin position="1"/>
        <end position="390"/>
    </location>
</feature>
<feature type="domain" description="ATP-grasp" evidence="1">
    <location>
        <begin position="9"/>
        <end position="245"/>
    </location>
</feature>
<feature type="binding site" evidence="1">
    <location>
        <position position="46"/>
    </location>
    <ligand>
        <name>ATP</name>
        <dbReference type="ChEBI" id="CHEBI:30616"/>
    </ligand>
</feature>
<feature type="binding site" evidence="1">
    <location>
        <begin position="53"/>
        <end position="55"/>
    </location>
    <ligand>
        <name>ATP</name>
        <dbReference type="ChEBI" id="CHEBI:30616"/>
    </ligand>
</feature>
<feature type="binding site" evidence="1">
    <location>
        <position position="99"/>
    </location>
    <ligand>
        <name>ATP</name>
        <dbReference type="ChEBI" id="CHEBI:30616"/>
    </ligand>
</feature>
<feature type="binding site" evidence="1">
    <location>
        <position position="102"/>
    </location>
    <ligand>
        <name>ATP</name>
        <dbReference type="ChEBI" id="CHEBI:30616"/>
    </ligand>
</feature>
<feature type="binding site" evidence="1">
    <location>
        <position position="107"/>
    </location>
    <ligand>
        <name>ATP</name>
        <dbReference type="ChEBI" id="CHEBI:30616"/>
    </ligand>
</feature>
<feature type="binding site" evidence="1">
    <location>
        <position position="200"/>
    </location>
    <ligand>
        <name>Mg(2+)</name>
        <dbReference type="ChEBI" id="CHEBI:18420"/>
    </ligand>
</feature>
<feature type="binding site" evidence="1">
    <location>
        <position position="214"/>
    </location>
    <ligand>
        <name>Mg(2+)</name>
        <dbReference type="ChEBI" id="CHEBI:18420"/>
    </ligand>
</feature>
<feature type="binding site" evidence="1">
    <location>
        <position position="265"/>
    </location>
    <ligand>
        <name>substrate</name>
        <note>ligand shared with subunit alpha</note>
    </ligand>
</feature>
<feature type="binding site" evidence="1">
    <location>
        <begin position="322"/>
        <end position="324"/>
    </location>
    <ligand>
        <name>substrate</name>
        <note>ligand shared with subunit alpha</note>
    </ligand>
</feature>